<sequence>MNKADYKGVWVFAEQRDGELQKVSLELLGKGKEMAEKLGVELTAVLLGHNTEKMSKDLLSHGADKVLAADNELLAHFSTDGYAKVICDLVNERKPEILFIGATFIGRDLGPRIAARLSTGLTADCTSLDIDVENRDLLATRPAFGGNLIATIVCSDHRPQMATVRPGVFEKLPVNDANVSDDKIEKVAIKLTASDIRTKVSKVVKLAKDIADIGEAKVLVAGGRGVGSKENFEKLEELASLLGGTIAASRAAIEKEWVDKDLQVGQTGKTVRPTLYIACGISGAIQHLAGMQDSDYIIAINKDVEAPIMKVADLAIVGDVNKVVPELIAQVKAANN</sequence>
<name>ETFA_CLOAB</name>
<accession>P52039</accession>
<gene>
    <name type="primary">etfA</name>
    <name type="ordered locus">CA_C2709</name>
</gene>
<proteinExistence type="inferred from homology"/>
<keyword id="KW-0249">Electron transport</keyword>
<keyword id="KW-0274">FAD</keyword>
<keyword id="KW-0285">Flavoprotein</keyword>
<keyword id="KW-1185">Reference proteome</keyword>
<keyword id="KW-0813">Transport</keyword>
<evidence type="ECO:0000250" key="1"/>
<evidence type="ECO:0000255" key="2"/>
<evidence type="ECO:0000305" key="3"/>
<organism>
    <name type="scientific">Clostridium acetobutylicum (strain ATCC 824 / DSM 792 / JCM 1419 / IAM 19013 / LMG 5710 / NBRC 13948 / NRRL B-527 / VKM B-1787 / 2291 / W)</name>
    <dbReference type="NCBI Taxonomy" id="272562"/>
    <lineage>
        <taxon>Bacteria</taxon>
        <taxon>Bacillati</taxon>
        <taxon>Bacillota</taxon>
        <taxon>Clostridia</taxon>
        <taxon>Eubacteriales</taxon>
        <taxon>Clostridiaceae</taxon>
        <taxon>Clostridium</taxon>
    </lineage>
</organism>
<dbReference type="EMBL" id="U17110">
    <property type="protein sequence ID" value="AAA95970.1"/>
    <property type="molecule type" value="Genomic_DNA"/>
</dbReference>
<dbReference type="EMBL" id="AE001437">
    <property type="protein sequence ID" value="AAK80655.1"/>
    <property type="molecule type" value="Genomic_DNA"/>
</dbReference>
<dbReference type="PIR" id="D97233">
    <property type="entry name" value="D97233"/>
</dbReference>
<dbReference type="PIR" id="T47264">
    <property type="entry name" value="T47264"/>
</dbReference>
<dbReference type="RefSeq" id="NP_349315.1">
    <property type="nucleotide sequence ID" value="NC_003030.1"/>
</dbReference>
<dbReference type="RefSeq" id="WP_010965996.1">
    <property type="nucleotide sequence ID" value="NC_003030.1"/>
</dbReference>
<dbReference type="SMR" id="P52039"/>
<dbReference type="STRING" id="272562.CA_C2709"/>
<dbReference type="DNASU" id="1118892"/>
<dbReference type="KEGG" id="cac:CA_C2709"/>
<dbReference type="PATRIC" id="fig|272562.8.peg.2899"/>
<dbReference type="eggNOG" id="COG2025">
    <property type="taxonomic scope" value="Bacteria"/>
</dbReference>
<dbReference type="HOGENOM" id="CLU_034178_1_1_9"/>
<dbReference type="OrthoDB" id="9770286at2"/>
<dbReference type="BioCyc" id="MetaCyc:MONOMER-21349"/>
<dbReference type="Proteomes" id="UP000000814">
    <property type="component" value="Chromosome"/>
</dbReference>
<dbReference type="GO" id="GO:0009055">
    <property type="term" value="F:electron transfer activity"/>
    <property type="evidence" value="ECO:0007669"/>
    <property type="project" value="InterPro"/>
</dbReference>
<dbReference type="GO" id="GO:0050660">
    <property type="term" value="F:flavin adenine dinucleotide binding"/>
    <property type="evidence" value="ECO:0007669"/>
    <property type="project" value="InterPro"/>
</dbReference>
<dbReference type="GO" id="GO:0033539">
    <property type="term" value="P:fatty acid beta-oxidation using acyl-CoA dehydrogenase"/>
    <property type="evidence" value="ECO:0007669"/>
    <property type="project" value="TreeGrafter"/>
</dbReference>
<dbReference type="CDD" id="cd01715">
    <property type="entry name" value="ETF_alpha"/>
    <property type="match status" value="1"/>
</dbReference>
<dbReference type="FunFam" id="3.40.50.1220:FF:000001">
    <property type="entry name" value="Electron transfer flavoprotein, alpha subunit"/>
    <property type="match status" value="1"/>
</dbReference>
<dbReference type="Gene3D" id="3.40.50.620">
    <property type="entry name" value="HUPs"/>
    <property type="match status" value="1"/>
</dbReference>
<dbReference type="Gene3D" id="3.40.50.1220">
    <property type="entry name" value="TPP-binding domain"/>
    <property type="match status" value="1"/>
</dbReference>
<dbReference type="InterPro" id="IPR029035">
    <property type="entry name" value="DHS-like_NAD/FAD-binding_dom"/>
</dbReference>
<dbReference type="InterPro" id="IPR014730">
    <property type="entry name" value="ETF_a/b_N"/>
</dbReference>
<dbReference type="InterPro" id="IPR001308">
    <property type="entry name" value="ETF_a/FixB"/>
</dbReference>
<dbReference type="InterPro" id="IPR033947">
    <property type="entry name" value="ETF_alpha_N"/>
</dbReference>
<dbReference type="InterPro" id="IPR014731">
    <property type="entry name" value="ETF_asu_C"/>
</dbReference>
<dbReference type="InterPro" id="IPR018206">
    <property type="entry name" value="ETF_asu_C_CS"/>
</dbReference>
<dbReference type="InterPro" id="IPR014729">
    <property type="entry name" value="Rossmann-like_a/b/a_fold"/>
</dbReference>
<dbReference type="PANTHER" id="PTHR43153">
    <property type="entry name" value="ELECTRON TRANSFER FLAVOPROTEIN ALPHA"/>
    <property type="match status" value="1"/>
</dbReference>
<dbReference type="PANTHER" id="PTHR43153:SF1">
    <property type="entry name" value="ELECTRON TRANSFER FLAVOPROTEIN SUBUNIT ALPHA, MITOCHONDRIAL"/>
    <property type="match status" value="1"/>
</dbReference>
<dbReference type="Pfam" id="PF01012">
    <property type="entry name" value="ETF"/>
    <property type="match status" value="1"/>
</dbReference>
<dbReference type="Pfam" id="PF00766">
    <property type="entry name" value="ETF_alpha"/>
    <property type="match status" value="1"/>
</dbReference>
<dbReference type="PIRSF" id="PIRSF000089">
    <property type="entry name" value="Electra_flavoP_a"/>
    <property type="match status" value="1"/>
</dbReference>
<dbReference type="SMART" id="SM00893">
    <property type="entry name" value="ETF"/>
    <property type="match status" value="1"/>
</dbReference>
<dbReference type="SUPFAM" id="SSF52402">
    <property type="entry name" value="Adenine nucleotide alpha hydrolases-like"/>
    <property type="match status" value="1"/>
</dbReference>
<dbReference type="SUPFAM" id="SSF52467">
    <property type="entry name" value="DHS-like NAD/FAD-binding domain"/>
    <property type="match status" value="1"/>
</dbReference>
<dbReference type="PROSITE" id="PS00696">
    <property type="entry name" value="ETF_ALPHA"/>
    <property type="match status" value="1"/>
</dbReference>
<protein>
    <recommendedName>
        <fullName>Electron transfer flavoprotein subunit alpha</fullName>
        <shortName>Alpha-ETF</shortName>
    </recommendedName>
    <alternativeName>
        <fullName>Electron transfer flavoprotein large subunit</fullName>
        <shortName>ETFLS</shortName>
    </alternativeName>
</protein>
<feature type="chain" id="PRO_0000167847" description="Electron transfer flavoprotein subunit alpha">
    <location>
        <begin position="1"/>
        <end position="336"/>
    </location>
</feature>
<feature type="binding site" evidence="2">
    <location>
        <begin position="275"/>
        <end position="303"/>
    </location>
    <ligand>
        <name>FAD</name>
        <dbReference type="ChEBI" id="CHEBI:57692"/>
    </ligand>
</feature>
<feature type="sequence conflict" description="In Ref. 1; AAA95970." evidence="3" ref="1">
    <original>F</original>
    <variation>FF</variation>
    <location>
        <position position="169"/>
    </location>
</feature>
<reference key="1">
    <citation type="journal article" date="1996" name="J. Bacteriol.">
        <title>Cloning, sequencing, and expression of clustered genes encoding beta-hydroxybutyryl-coenzyme A (CoA) dehydrogenase, crotonase, and butyryl-CoA dehydrogenase from Clostridium acetobutylicum ATCC 824.</title>
        <authorList>
            <person name="Boynton Z.L."/>
            <person name="Bennett G.N."/>
            <person name="Rudolph F.B."/>
        </authorList>
    </citation>
    <scope>NUCLEOTIDE SEQUENCE [GENOMIC DNA]</scope>
    <source>
        <strain>ATCC 824 / DSM 792 / JCM 1419 / IAM 19013 / LMG 5710 / NBRC 13948 / NRRL B-527 / VKM B-1787 / 2291 / W</strain>
    </source>
</reference>
<reference key="2">
    <citation type="journal article" date="2001" name="J. Bacteriol.">
        <title>Genome sequence and comparative analysis of the solvent-producing bacterium Clostridium acetobutylicum.</title>
        <authorList>
            <person name="Noelling J."/>
            <person name="Breton G."/>
            <person name="Omelchenko M.V."/>
            <person name="Makarova K.S."/>
            <person name="Zeng Q."/>
            <person name="Gibson R."/>
            <person name="Lee H.M."/>
            <person name="Dubois J."/>
            <person name="Qiu D."/>
            <person name="Hitti J."/>
            <person name="Wolf Y.I."/>
            <person name="Tatusov R.L."/>
            <person name="Sabathe F."/>
            <person name="Doucette-Stamm L.A."/>
            <person name="Soucaille P."/>
            <person name="Daly M.J."/>
            <person name="Bennett G.N."/>
            <person name="Koonin E.V."/>
            <person name="Smith D.R."/>
        </authorList>
    </citation>
    <scope>NUCLEOTIDE SEQUENCE [LARGE SCALE GENOMIC DNA]</scope>
    <source>
        <strain>ATCC 824 / DSM 792 / JCM 1419 / IAM 19013 / LMG 5710 / NBRC 13948 / NRRL B-527 / VKM B-1787 / 2291 / W</strain>
    </source>
</reference>
<comment type="function">
    <text evidence="1">The electron transfer flavoprotein serves as a specific electron acceptor for other dehydrogenases. It transfers the electrons to the main respiratory chain via ETF-ubiquinone oxidoreductase (ETF dehydrogenase) (By similarity).</text>
</comment>
<comment type="cofactor">
    <cofactor evidence="1">
        <name>FAD</name>
        <dbReference type="ChEBI" id="CHEBI:57692"/>
    </cofactor>
    <text evidence="1">Binds 1 FAD per dimer.</text>
</comment>
<comment type="subunit">
    <text>Heterodimer of an alpha and a beta subunit.</text>
</comment>
<comment type="similarity">
    <text evidence="3">Belongs to the ETF alpha-subunit/FixB family.</text>
</comment>